<proteinExistence type="inferred from homology"/>
<gene>
    <name evidence="1" type="primary">psd</name>
    <name type="ordered locus">Shew185_3776</name>
</gene>
<feature type="chain" id="PRO_1000026582" description="Phosphatidylserine decarboxylase beta chain" evidence="1">
    <location>
        <begin position="1"/>
        <end position="251"/>
    </location>
</feature>
<feature type="chain" id="PRO_1000026583" description="Phosphatidylserine decarboxylase alpha chain" evidence="1">
    <location>
        <begin position="252"/>
        <end position="292"/>
    </location>
</feature>
<feature type="active site" description="Charge relay system; for autoendoproteolytic cleavage activity" evidence="1">
    <location>
        <position position="89"/>
    </location>
</feature>
<feature type="active site" description="Charge relay system; for autoendoproteolytic cleavage activity" evidence="1">
    <location>
        <position position="146"/>
    </location>
</feature>
<feature type="active site" description="Charge relay system; for autoendoproteolytic cleavage activity" evidence="1">
    <location>
        <position position="252"/>
    </location>
</feature>
<feature type="active site" description="Schiff-base intermediate with substrate; via pyruvic acid; for decarboxylase activity" evidence="1">
    <location>
        <position position="252"/>
    </location>
</feature>
<feature type="site" description="Cleavage (non-hydrolytic); by autocatalysis" evidence="1">
    <location>
        <begin position="251"/>
        <end position="252"/>
    </location>
</feature>
<feature type="modified residue" description="Pyruvic acid (Ser); by autocatalysis" evidence="1">
    <location>
        <position position="252"/>
    </location>
</feature>
<reference key="1">
    <citation type="submission" date="2007-07" db="EMBL/GenBank/DDBJ databases">
        <title>Complete sequence of chromosome of Shewanella baltica OS185.</title>
        <authorList>
            <consortium name="US DOE Joint Genome Institute"/>
            <person name="Copeland A."/>
            <person name="Lucas S."/>
            <person name="Lapidus A."/>
            <person name="Barry K."/>
            <person name="Glavina del Rio T."/>
            <person name="Dalin E."/>
            <person name="Tice H."/>
            <person name="Pitluck S."/>
            <person name="Sims D."/>
            <person name="Brettin T."/>
            <person name="Bruce D."/>
            <person name="Detter J.C."/>
            <person name="Han C."/>
            <person name="Schmutz J."/>
            <person name="Larimer F."/>
            <person name="Land M."/>
            <person name="Hauser L."/>
            <person name="Kyrpides N."/>
            <person name="Mikhailova N."/>
            <person name="Brettar I."/>
            <person name="Rodrigues J."/>
            <person name="Konstantinidis K."/>
            <person name="Tiedje J."/>
            <person name="Richardson P."/>
        </authorList>
    </citation>
    <scope>NUCLEOTIDE SEQUENCE [LARGE SCALE GENOMIC DNA]</scope>
    <source>
        <strain>OS185</strain>
    </source>
</reference>
<name>PSD_SHEB8</name>
<sequence>MDKVKIALQYMLPKHLLSRLVGKLAAAEAGALTTAAIKWFIKQYKIDMSEAAQSEPEAYKSFNAFFTRALKPGIRPLDMDADIMVHPVDGAVSQLGPIKNGRIFQAKGHHYSSLTLLGDQAEDAKRFEGGDFATIYLAPKDYHRIHMPIKGTLSKMTYVPGELFSVNPLTARNVPGLFARNERVVAIFETELGPLAMVLVGATIVASIETVWAGTVTPPTGKQVFTWEYPTQGPDAITLDKGEEMGRFKLGSTVVMLFAKDAIATFAEGVEAEAVTRMGQAFANLKDVKHAD</sequence>
<organism>
    <name type="scientific">Shewanella baltica (strain OS185)</name>
    <dbReference type="NCBI Taxonomy" id="402882"/>
    <lineage>
        <taxon>Bacteria</taxon>
        <taxon>Pseudomonadati</taxon>
        <taxon>Pseudomonadota</taxon>
        <taxon>Gammaproteobacteria</taxon>
        <taxon>Alteromonadales</taxon>
        <taxon>Shewanellaceae</taxon>
        <taxon>Shewanella</taxon>
    </lineage>
</organism>
<keyword id="KW-1003">Cell membrane</keyword>
<keyword id="KW-0210">Decarboxylase</keyword>
<keyword id="KW-0444">Lipid biosynthesis</keyword>
<keyword id="KW-0443">Lipid metabolism</keyword>
<keyword id="KW-0456">Lyase</keyword>
<keyword id="KW-0472">Membrane</keyword>
<keyword id="KW-0594">Phospholipid biosynthesis</keyword>
<keyword id="KW-1208">Phospholipid metabolism</keyword>
<keyword id="KW-0670">Pyruvate</keyword>
<keyword id="KW-0865">Zymogen</keyword>
<comment type="function">
    <text evidence="1">Catalyzes the formation of phosphatidylethanolamine (PtdEtn) from phosphatidylserine (PtdSer).</text>
</comment>
<comment type="catalytic activity">
    <reaction evidence="1">
        <text>a 1,2-diacyl-sn-glycero-3-phospho-L-serine + H(+) = a 1,2-diacyl-sn-glycero-3-phosphoethanolamine + CO2</text>
        <dbReference type="Rhea" id="RHEA:20828"/>
        <dbReference type="ChEBI" id="CHEBI:15378"/>
        <dbReference type="ChEBI" id="CHEBI:16526"/>
        <dbReference type="ChEBI" id="CHEBI:57262"/>
        <dbReference type="ChEBI" id="CHEBI:64612"/>
        <dbReference type="EC" id="4.1.1.65"/>
    </reaction>
</comment>
<comment type="cofactor">
    <cofactor evidence="1">
        <name>pyruvate</name>
        <dbReference type="ChEBI" id="CHEBI:15361"/>
    </cofactor>
    <text evidence="1">Binds 1 pyruvoyl group covalently per subunit.</text>
</comment>
<comment type="pathway">
    <text evidence="1">Phospholipid metabolism; phosphatidylethanolamine biosynthesis; phosphatidylethanolamine from CDP-diacylglycerol: step 2/2.</text>
</comment>
<comment type="subunit">
    <text evidence="1">Heterodimer of a large membrane-associated beta subunit and a small pyruvoyl-containing alpha subunit.</text>
</comment>
<comment type="subcellular location">
    <subcellularLocation>
        <location evidence="1">Cell membrane</location>
        <topology evidence="1">Peripheral membrane protein</topology>
    </subcellularLocation>
</comment>
<comment type="PTM">
    <text evidence="1">Is synthesized initially as an inactive proenzyme. Formation of the active enzyme involves a self-maturation process in which the active site pyruvoyl group is generated from an internal serine residue via an autocatalytic post-translational modification. Two non-identical subunits are generated from the proenzyme in this reaction, and the pyruvate is formed at the N-terminus of the alpha chain, which is derived from the carboxyl end of the proenzyme. The autoendoproteolytic cleavage occurs by a canonical serine protease mechanism, in which the side chain hydroxyl group of the serine supplies its oxygen atom to form the C-terminus of the beta chain, while the remainder of the serine residue undergoes an oxidative deamination to produce ammonia and the pyruvoyl prosthetic group on the alpha chain. During this reaction, the Ser that is part of the protease active site of the proenzyme becomes the pyruvoyl prosthetic group, which constitutes an essential element of the active site of the mature decarboxylase.</text>
</comment>
<comment type="similarity">
    <text evidence="1">Belongs to the phosphatidylserine decarboxylase family. PSD-B subfamily. Prokaryotic type I sub-subfamily.</text>
</comment>
<protein>
    <recommendedName>
        <fullName evidence="1">Phosphatidylserine decarboxylase proenzyme</fullName>
        <ecNumber evidence="1">4.1.1.65</ecNumber>
    </recommendedName>
    <component>
        <recommendedName>
            <fullName evidence="1">Phosphatidylserine decarboxylase alpha chain</fullName>
        </recommendedName>
    </component>
    <component>
        <recommendedName>
            <fullName evidence="1">Phosphatidylserine decarboxylase beta chain</fullName>
        </recommendedName>
    </component>
</protein>
<dbReference type="EC" id="4.1.1.65" evidence="1"/>
<dbReference type="EMBL" id="CP000753">
    <property type="protein sequence ID" value="ABS09900.1"/>
    <property type="molecule type" value="Genomic_DNA"/>
</dbReference>
<dbReference type="RefSeq" id="WP_006084212.1">
    <property type="nucleotide sequence ID" value="NC_009665.1"/>
</dbReference>
<dbReference type="SMR" id="A6WSW1"/>
<dbReference type="GeneID" id="11773912"/>
<dbReference type="KEGG" id="sbm:Shew185_3776"/>
<dbReference type="HOGENOM" id="CLU_029061_4_1_6"/>
<dbReference type="UniPathway" id="UPA00558">
    <property type="reaction ID" value="UER00616"/>
</dbReference>
<dbReference type="GO" id="GO:0005886">
    <property type="term" value="C:plasma membrane"/>
    <property type="evidence" value="ECO:0007669"/>
    <property type="project" value="UniProtKB-SubCell"/>
</dbReference>
<dbReference type="GO" id="GO:0004609">
    <property type="term" value="F:phosphatidylserine decarboxylase activity"/>
    <property type="evidence" value="ECO:0007669"/>
    <property type="project" value="UniProtKB-UniRule"/>
</dbReference>
<dbReference type="GO" id="GO:0006646">
    <property type="term" value="P:phosphatidylethanolamine biosynthetic process"/>
    <property type="evidence" value="ECO:0007669"/>
    <property type="project" value="UniProtKB-UniRule"/>
</dbReference>
<dbReference type="HAMAP" id="MF_00662">
    <property type="entry name" value="PS_decarb_PSD_B_type1"/>
    <property type="match status" value="1"/>
</dbReference>
<dbReference type="InterPro" id="IPR003817">
    <property type="entry name" value="PS_Dcarbxylase"/>
</dbReference>
<dbReference type="InterPro" id="IPR033177">
    <property type="entry name" value="PSD-B"/>
</dbReference>
<dbReference type="InterPro" id="IPR033178">
    <property type="entry name" value="PSD_type1_pro"/>
</dbReference>
<dbReference type="NCBIfam" id="TIGR00163">
    <property type="entry name" value="PS_decarb"/>
    <property type="match status" value="1"/>
</dbReference>
<dbReference type="PANTHER" id="PTHR10067">
    <property type="entry name" value="PHOSPHATIDYLSERINE DECARBOXYLASE"/>
    <property type="match status" value="1"/>
</dbReference>
<dbReference type="PANTHER" id="PTHR10067:SF6">
    <property type="entry name" value="PHOSPHATIDYLSERINE DECARBOXYLASE PROENZYME, MITOCHONDRIAL"/>
    <property type="match status" value="1"/>
</dbReference>
<dbReference type="Pfam" id="PF02666">
    <property type="entry name" value="PS_Dcarbxylase"/>
    <property type="match status" value="1"/>
</dbReference>
<evidence type="ECO:0000255" key="1">
    <source>
        <dbReference type="HAMAP-Rule" id="MF_00662"/>
    </source>
</evidence>
<accession>A6WSW1</accession>